<reference key="1">
    <citation type="journal article" date="2006" name="Nat. Biotechnol.">
        <title>Complete genome of the mutualistic, N2-fixing grass endophyte Azoarcus sp. strain BH72.</title>
        <authorList>
            <person name="Krause A."/>
            <person name="Ramakumar A."/>
            <person name="Bartels D."/>
            <person name="Battistoni F."/>
            <person name="Bekel T."/>
            <person name="Boch J."/>
            <person name="Boehm M."/>
            <person name="Friedrich F."/>
            <person name="Hurek T."/>
            <person name="Krause L."/>
            <person name="Linke B."/>
            <person name="McHardy A.C."/>
            <person name="Sarkar A."/>
            <person name="Schneiker S."/>
            <person name="Syed A.A."/>
            <person name="Thauer R."/>
            <person name="Vorhoelter F.-J."/>
            <person name="Weidner S."/>
            <person name="Puehler A."/>
            <person name="Reinhold-Hurek B."/>
            <person name="Kaiser O."/>
            <person name="Goesmann A."/>
        </authorList>
    </citation>
    <scope>NUCLEOTIDE SEQUENCE [LARGE SCALE GENOMIC DNA]</scope>
    <source>
        <strain>BH72</strain>
    </source>
</reference>
<evidence type="ECO:0000255" key="1">
    <source>
        <dbReference type="HAMAP-Rule" id="MF_00662"/>
    </source>
</evidence>
<sequence length="288" mass="31882">MSDRLAVLPQYLLPKQRLTLFMGRLAGARAGSLTTAVIRWFIARYGVDMSEAENPDPAAYASFNEFFTRPLRAGARPLAQADFICPVDGAISQFGAIERDQIFQAKGHRYTTTALLGGDRELATHFDHGHFATLYLSPRDYHRIHMPCAGRLTRMIHVPGELFSVNPTTARGVPGLFARNERVVCVFDGEHGPFVMVLVGATIVGSMATVWHGVVNSPRPGMIRDWRYPEGQVVLGQGEEMGRFLLGSTVVMLFPQDCLRFNAEWAPEKAIRLGEKMGDLFSCTPQAV</sequence>
<proteinExistence type="inferred from homology"/>
<feature type="chain" id="PRO_1000026536" description="Phosphatidylserine decarboxylase beta chain" evidence="1">
    <location>
        <begin position="1"/>
        <end position="247"/>
    </location>
</feature>
<feature type="chain" id="PRO_1000026537" description="Phosphatidylserine decarboxylase alpha chain" evidence="1">
    <location>
        <begin position="248"/>
        <end position="288"/>
    </location>
</feature>
<feature type="active site" description="Charge relay system; for autoendoproteolytic cleavage activity" evidence="1">
    <location>
        <position position="88"/>
    </location>
</feature>
<feature type="active site" description="Charge relay system; for autoendoproteolytic cleavage activity" evidence="1">
    <location>
        <position position="145"/>
    </location>
</feature>
<feature type="active site" description="Charge relay system; for autoendoproteolytic cleavage activity" evidence="1">
    <location>
        <position position="248"/>
    </location>
</feature>
<feature type="active site" description="Schiff-base intermediate with substrate; via pyruvic acid; for decarboxylase activity" evidence="1">
    <location>
        <position position="248"/>
    </location>
</feature>
<feature type="site" description="Cleavage (non-hydrolytic); by autocatalysis" evidence="1">
    <location>
        <begin position="247"/>
        <end position="248"/>
    </location>
</feature>
<feature type="modified residue" description="Pyruvic acid (Ser); by autocatalysis" evidence="1">
    <location>
        <position position="248"/>
    </location>
</feature>
<comment type="function">
    <text evidence="1">Catalyzes the formation of phosphatidylethanolamine (PtdEtn) from phosphatidylserine (PtdSer).</text>
</comment>
<comment type="catalytic activity">
    <reaction evidence="1">
        <text>a 1,2-diacyl-sn-glycero-3-phospho-L-serine + H(+) = a 1,2-diacyl-sn-glycero-3-phosphoethanolamine + CO2</text>
        <dbReference type="Rhea" id="RHEA:20828"/>
        <dbReference type="ChEBI" id="CHEBI:15378"/>
        <dbReference type="ChEBI" id="CHEBI:16526"/>
        <dbReference type="ChEBI" id="CHEBI:57262"/>
        <dbReference type="ChEBI" id="CHEBI:64612"/>
        <dbReference type="EC" id="4.1.1.65"/>
    </reaction>
</comment>
<comment type="cofactor">
    <cofactor evidence="1">
        <name>pyruvate</name>
        <dbReference type="ChEBI" id="CHEBI:15361"/>
    </cofactor>
    <text evidence="1">Binds 1 pyruvoyl group covalently per subunit.</text>
</comment>
<comment type="pathway">
    <text evidence="1">Phospholipid metabolism; phosphatidylethanolamine biosynthesis; phosphatidylethanolamine from CDP-diacylglycerol: step 2/2.</text>
</comment>
<comment type="subunit">
    <text evidence="1">Heterodimer of a large membrane-associated beta subunit and a small pyruvoyl-containing alpha subunit.</text>
</comment>
<comment type="subcellular location">
    <subcellularLocation>
        <location evidence="1">Cell membrane</location>
        <topology evidence="1">Peripheral membrane protein</topology>
    </subcellularLocation>
</comment>
<comment type="PTM">
    <text evidence="1">Is synthesized initially as an inactive proenzyme. Formation of the active enzyme involves a self-maturation process in which the active site pyruvoyl group is generated from an internal serine residue via an autocatalytic post-translational modification. Two non-identical subunits are generated from the proenzyme in this reaction, and the pyruvate is formed at the N-terminus of the alpha chain, which is derived from the carboxyl end of the proenzyme. The autoendoproteolytic cleavage occurs by a canonical serine protease mechanism, in which the side chain hydroxyl group of the serine supplies its oxygen atom to form the C-terminus of the beta chain, while the remainder of the serine residue undergoes an oxidative deamination to produce ammonia and the pyruvoyl prosthetic group on the alpha chain. During this reaction, the Ser that is part of the protease active site of the proenzyme becomes the pyruvoyl prosthetic group, which constitutes an essential element of the active site of the mature decarboxylase.</text>
</comment>
<comment type="similarity">
    <text evidence="1">Belongs to the phosphatidylserine decarboxylase family. PSD-B subfamily. Prokaryotic type I sub-subfamily.</text>
</comment>
<keyword id="KW-1003">Cell membrane</keyword>
<keyword id="KW-0210">Decarboxylase</keyword>
<keyword id="KW-0444">Lipid biosynthesis</keyword>
<keyword id="KW-0443">Lipid metabolism</keyword>
<keyword id="KW-0456">Lyase</keyword>
<keyword id="KW-0472">Membrane</keyword>
<keyword id="KW-0594">Phospholipid biosynthesis</keyword>
<keyword id="KW-1208">Phospholipid metabolism</keyword>
<keyword id="KW-0670">Pyruvate</keyword>
<keyword id="KW-1185">Reference proteome</keyword>
<keyword id="KW-0865">Zymogen</keyword>
<accession>A1KBF9</accession>
<organism>
    <name type="scientific">Azoarcus sp. (strain BH72)</name>
    <dbReference type="NCBI Taxonomy" id="418699"/>
    <lineage>
        <taxon>Bacteria</taxon>
        <taxon>Pseudomonadati</taxon>
        <taxon>Pseudomonadota</taxon>
        <taxon>Betaproteobacteria</taxon>
        <taxon>Rhodocyclales</taxon>
        <taxon>Zoogloeaceae</taxon>
        <taxon>Azoarcus</taxon>
    </lineage>
</organism>
<protein>
    <recommendedName>
        <fullName evidence="1">Phosphatidylserine decarboxylase proenzyme</fullName>
        <ecNumber evidence="1">4.1.1.65</ecNumber>
    </recommendedName>
    <component>
        <recommendedName>
            <fullName evidence="1">Phosphatidylserine decarboxylase alpha chain</fullName>
        </recommendedName>
    </component>
    <component>
        <recommendedName>
            <fullName evidence="1">Phosphatidylserine decarboxylase beta chain</fullName>
        </recommendedName>
    </component>
</protein>
<name>PSD_AZOSB</name>
<gene>
    <name evidence="1" type="primary">psd</name>
    <name type="ordered locus">azo3549</name>
</gene>
<dbReference type="EC" id="4.1.1.65" evidence="1"/>
<dbReference type="EMBL" id="AM406670">
    <property type="protein sequence ID" value="CAL96165.1"/>
    <property type="molecule type" value="Genomic_DNA"/>
</dbReference>
<dbReference type="RefSeq" id="WP_011767271.1">
    <property type="nucleotide sequence ID" value="NC_008702.1"/>
</dbReference>
<dbReference type="SMR" id="A1KBF9"/>
<dbReference type="STRING" id="62928.azo3549"/>
<dbReference type="KEGG" id="aoa:dqs_3692"/>
<dbReference type="KEGG" id="azo:azo3549"/>
<dbReference type="eggNOG" id="COG0688">
    <property type="taxonomic scope" value="Bacteria"/>
</dbReference>
<dbReference type="HOGENOM" id="CLU_029061_4_1_4"/>
<dbReference type="OrthoDB" id="9802030at2"/>
<dbReference type="UniPathway" id="UPA00558">
    <property type="reaction ID" value="UER00616"/>
</dbReference>
<dbReference type="Proteomes" id="UP000002588">
    <property type="component" value="Chromosome"/>
</dbReference>
<dbReference type="GO" id="GO:0005886">
    <property type="term" value="C:plasma membrane"/>
    <property type="evidence" value="ECO:0007669"/>
    <property type="project" value="UniProtKB-SubCell"/>
</dbReference>
<dbReference type="GO" id="GO:0004609">
    <property type="term" value="F:phosphatidylserine decarboxylase activity"/>
    <property type="evidence" value="ECO:0007669"/>
    <property type="project" value="UniProtKB-UniRule"/>
</dbReference>
<dbReference type="GO" id="GO:0006646">
    <property type="term" value="P:phosphatidylethanolamine biosynthetic process"/>
    <property type="evidence" value="ECO:0007669"/>
    <property type="project" value="UniProtKB-UniRule"/>
</dbReference>
<dbReference type="HAMAP" id="MF_00662">
    <property type="entry name" value="PS_decarb_PSD_B_type1"/>
    <property type="match status" value="1"/>
</dbReference>
<dbReference type="InterPro" id="IPR003817">
    <property type="entry name" value="PS_Dcarbxylase"/>
</dbReference>
<dbReference type="InterPro" id="IPR033177">
    <property type="entry name" value="PSD-B"/>
</dbReference>
<dbReference type="InterPro" id="IPR033178">
    <property type="entry name" value="PSD_type1_pro"/>
</dbReference>
<dbReference type="NCBIfam" id="TIGR00163">
    <property type="entry name" value="PS_decarb"/>
    <property type="match status" value="1"/>
</dbReference>
<dbReference type="PANTHER" id="PTHR10067">
    <property type="entry name" value="PHOSPHATIDYLSERINE DECARBOXYLASE"/>
    <property type="match status" value="1"/>
</dbReference>
<dbReference type="PANTHER" id="PTHR10067:SF6">
    <property type="entry name" value="PHOSPHATIDYLSERINE DECARBOXYLASE PROENZYME, MITOCHONDRIAL"/>
    <property type="match status" value="1"/>
</dbReference>
<dbReference type="Pfam" id="PF02666">
    <property type="entry name" value="PS_Dcarbxylase"/>
    <property type="match status" value="1"/>
</dbReference>